<protein>
    <recommendedName>
        <fullName evidence="1">UPF0301 protein NGK_1355</fullName>
    </recommendedName>
</protein>
<evidence type="ECO:0000255" key="1">
    <source>
        <dbReference type="HAMAP-Rule" id="MF_00758"/>
    </source>
</evidence>
<name>Y1355_NEIG2</name>
<sequence length="182" mass="19824">MNLSNHFLVAMPDMEDAFFSQSVVYICKHDEDGALGIAINKPSPITMDMIFSATGKNIPMRMQHDSVMMGGPVQVERGYVVHTPIGNWQSSIGVSDGIALTSSRDVLENISREGAVDKALISIGYSSWSKGQLERELADNAWLTVPADEHILFDIPYEHRYAAAFAKLGIDPLALFSGAGHA</sequence>
<organism>
    <name type="scientific">Neisseria gonorrhoeae (strain NCCP11945)</name>
    <dbReference type="NCBI Taxonomy" id="521006"/>
    <lineage>
        <taxon>Bacteria</taxon>
        <taxon>Pseudomonadati</taxon>
        <taxon>Pseudomonadota</taxon>
        <taxon>Betaproteobacteria</taxon>
        <taxon>Neisseriales</taxon>
        <taxon>Neisseriaceae</taxon>
        <taxon>Neisseria</taxon>
    </lineage>
</organism>
<gene>
    <name type="ordered locus">NGK_1355</name>
</gene>
<accession>B4RMJ5</accession>
<comment type="similarity">
    <text evidence="1">Belongs to the UPF0301 (AlgH) family.</text>
</comment>
<feature type="chain" id="PRO_1000198282" description="UPF0301 protein NGK_1355">
    <location>
        <begin position="1"/>
        <end position="182"/>
    </location>
</feature>
<proteinExistence type="inferred from homology"/>
<dbReference type="EMBL" id="CP001050">
    <property type="protein sequence ID" value="ACF30029.1"/>
    <property type="molecule type" value="Genomic_DNA"/>
</dbReference>
<dbReference type="RefSeq" id="WP_003688988.1">
    <property type="nucleotide sequence ID" value="NC_011035.1"/>
</dbReference>
<dbReference type="SMR" id="B4RMJ5"/>
<dbReference type="KEGG" id="ngk:NGK_1355"/>
<dbReference type="HOGENOM" id="CLU_057596_1_0_4"/>
<dbReference type="Proteomes" id="UP000002564">
    <property type="component" value="Chromosome"/>
</dbReference>
<dbReference type="GO" id="GO:0005829">
    <property type="term" value="C:cytosol"/>
    <property type="evidence" value="ECO:0007669"/>
    <property type="project" value="TreeGrafter"/>
</dbReference>
<dbReference type="Gene3D" id="3.40.1740.10">
    <property type="entry name" value="VC0467-like"/>
    <property type="match status" value="1"/>
</dbReference>
<dbReference type="HAMAP" id="MF_00758">
    <property type="entry name" value="UPF0301"/>
    <property type="match status" value="1"/>
</dbReference>
<dbReference type="InterPro" id="IPR003774">
    <property type="entry name" value="AlgH-like"/>
</dbReference>
<dbReference type="NCBIfam" id="NF001266">
    <property type="entry name" value="PRK00228.1-1"/>
    <property type="match status" value="1"/>
</dbReference>
<dbReference type="PANTHER" id="PTHR30327">
    <property type="entry name" value="UNCHARACTERIZED PROTEIN YQGE"/>
    <property type="match status" value="1"/>
</dbReference>
<dbReference type="PANTHER" id="PTHR30327:SF1">
    <property type="entry name" value="UPF0301 PROTEIN YQGE"/>
    <property type="match status" value="1"/>
</dbReference>
<dbReference type="Pfam" id="PF02622">
    <property type="entry name" value="DUF179"/>
    <property type="match status" value="1"/>
</dbReference>
<dbReference type="SUPFAM" id="SSF143456">
    <property type="entry name" value="VC0467-like"/>
    <property type="match status" value="1"/>
</dbReference>
<reference key="1">
    <citation type="journal article" date="2008" name="J. Bacteriol.">
        <title>Complete genome sequence of Neisseria gonorrhoeae NCCP11945.</title>
        <authorList>
            <person name="Chung G.T."/>
            <person name="Yoo J.S."/>
            <person name="Oh H.B."/>
            <person name="Lee Y.S."/>
            <person name="Cha S.H."/>
            <person name="Kim S.J."/>
            <person name="Yoo C.K."/>
        </authorList>
    </citation>
    <scope>NUCLEOTIDE SEQUENCE [LARGE SCALE GENOMIC DNA]</scope>
    <source>
        <strain>NCCP11945</strain>
    </source>
</reference>